<accession>Q47XL9</accession>
<organism>
    <name type="scientific">Colwellia psychrerythraea (strain 34H / ATCC BAA-681)</name>
    <name type="common">Vibrio psychroerythus</name>
    <dbReference type="NCBI Taxonomy" id="167879"/>
    <lineage>
        <taxon>Bacteria</taxon>
        <taxon>Pseudomonadati</taxon>
        <taxon>Pseudomonadota</taxon>
        <taxon>Gammaproteobacteria</taxon>
        <taxon>Alteromonadales</taxon>
        <taxon>Colwelliaceae</taxon>
        <taxon>Colwellia</taxon>
    </lineage>
</organism>
<dbReference type="EMBL" id="CP000083">
    <property type="protein sequence ID" value="AAZ27456.1"/>
    <property type="molecule type" value="Genomic_DNA"/>
</dbReference>
<dbReference type="RefSeq" id="WP_011044537.1">
    <property type="nucleotide sequence ID" value="NC_003910.7"/>
</dbReference>
<dbReference type="SMR" id="Q47XL9"/>
<dbReference type="STRING" id="167879.CPS_3784"/>
<dbReference type="KEGG" id="cps:CPS_3784"/>
<dbReference type="eggNOG" id="COG1219">
    <property type="taxonomic scope" value="Bacteria"/>
</dbReference>
<dbReference type="HOGENOM" id="CLU_014218_8_2_6"/>
<dbReference type="Proteomes" id="UP000000547">
    <property type="component" value="Chromosome"/>
</dbReference>
<dbReference type="GO" id="GO:0009376">
    <property type="term" value="C:HslUV protease complex"/>
    <property type="evidence" value="ECO:0007669"/>
    <property type="project" value="TreeGrafter"/>
</dbReference>
<dbReference type="GO" id="GO:0005524">
    <property type="term" value="F:ATP binding"/>
    <property type="evidence" value="ECO:0007669"/>
    <property type="project" value="UniProtKB-UniRule"/>
</dbReference>
<dbReference type="GO" id="GO:0016887">
    <property type="term" value="F:ATP hydrolysis activity"/>
    <property type="evidence" value="ECO:0007669"/>
    <property type="project" value="InterPro"/>
</dbReference>
<dbReference type="GO" id="GO:0140662">
    <property type="term" value="F:ATP-dependent protein folding chaperone"/>
    <property type="evidence" value="ECO:0007669"/>
    <property type="project" value="InterPro"/>
</dbReference>
<dbReference type="GO" id="GO:0046983">
    <property type="term" value="F:protein dimerization activity"/>
    <property type="evidence" value="ECO:0007669"/>
    <property type="project" value="InterPro"/>
</dbReference>
<dbReference type="GO" id="GO:0051082">
    <property type="term" value="F:unfolded protein binding"/>
    <property type="evidence" value="ECO:0007669"/>
    <property type="project" value="UniProtKB-UniRule"/>
</dbReference>
<dbReference type="GO" id="GO:0008270">
    <property type="term" value="F:zinc ion binding"/>
    <property type="evidence" value="ECO:0007669"/>
    <property type="project" value="InterPro"/>
</dbReference>
<dbReference type="GO" id="GO:0051301">
    <property type="term" value="P:cell division"/>
    <property type="evidence" value="ECO:0007669"/>
    <property type="project" value="TreeGrafter"/>
</dbReference>
<dbReference type="GO" id="GO:0051603">
    <property type="term" value="P:proteolysis involved in protein catabolic process"/>
    <property type="evidence" value="ECO:0007669"/>
    <property type="project" value="TreeGrafter"/>
</dbReference>
<dbReference type="CDD" id="cd19497">
    <property type="entry name" value="RecA-like_ClpX"/>
    <property type="match status" value="1"/>
</dbReference>
<dbReference type="FunFam" id="1.10.8.60:FF:000002">
    <property type="entry name" value="ATP-dependent Clp protease ATP-binding subunit ClpX"/>
    <property type="match status" value="1"/>
</dbReference>
<dbReference type="FunFam" id="3.40.50.300:FF:000005">
    <property type="entry name" value="ATP-dependent Clp protease ATP-binding subunit ClpX"/>
    <property type="match status" value="1"/>
</dbReference>
<dbReference type="Gene3D" id="1.10.8.60">
    <property type="match status" value="1"/>
</dbReference>
<dbReference type="Gene3D" id="6.20.220.10">
    <property type="entry name" value="ClpX chaperone, C4-type zinc finger domain"/>
    <property type="match status" value="1"/>
</dbReference>
<dbReference type="Gene3D" id="3.40.50.300">
    <property type="entry name" value="P-loop containing nucleotide triphosphate hydrolases"/>
    <property type="match status" value="1"/>
</dbReference>
<dbReference type="HAMAP" id="MF_00175">
    <property type="entry name" value="ClpX"/>
    <property type="match status" value="1"/>
</dbReference>
<dbReference type="InterPro" id="IPR003593">
    <property type="entry name" value="AAA+_ATPase"/>
</dbReference>
<dbReference type="InterPro" id="IPR050052">
    <property type="entry name" value="ATP-dep_Clp_protease_ClpX"/>
</dbReference>
<dbReference type="InterPro" id="IPR003959">
    <property type="entry name" value="ATPase_AAA_core"/>
</dbReference>
<dbReference type="InterPro" id="IPR019489">
    <property type="entry name" value="Clp_ATPase_C"/>
</dbReference>
<dbReference type="InterPro" id="IPR004487">
    <property type="entry name" value="Clp_protease_ATP-bd_su_ClpX"/>
</dbReference>
<dbReference type="InterPro" id="IPR046425">
    <property type="entry name" value="ClpX_bact"/>
</dbReference>
<dbReference type="InterPro" id="IPR027417">
    <property type="entry name" value="P-loop_NTPase"/>
</dbReference>
<dbReference type="InterPro" id="IPR010603">
    <property type="entry name" value="Znf_CppX_C4"/>
</dbReference>
<dbReference type="InterPro" id="IPR038366">
    <property type="entry name" value="Znf_CppX_C4_sf"/>
</dbReference>
<dbReference type="NCBIfam" id="TIGR00382">
    <property type="entry name" value="clpX"/>
    <property type="match status" value="1"/>
</dbReference>
<dbReference type="NCBIfam" id="NF003745">
    <property type="entry name" value="PRK05342.1"/>
    <property type="match status" value="1"/>
</dbReference>
<dbReference type="PANTHER" id="PTHR48102:SF7">
    <property type="entry name" value="ATP-DEPENDENT CLP PROTEASE ATP-BINDING SUBUNIT CLPX-LIKE, MITOCHONDRIAL"/>
    <property type="match status" value="1"/>
</dbReference>
<dbReference type="PANTHER" id="PTHR48102">
    <property type="entry name" value="ATP-DEPENDENT CLP PROTEASE ATP-BINDING SUBUNIT CLPX-LIKE, MITOCHONDRIAL-RELATED"/>
    <property type="match status" value="1"/>
</dbReference>
<dbReference type="Pfam" id="PF07724">
    <property type="entry name" value="AAA_2"/>
    <property type="match status" value="1"/>
</dbReference>
<dbReference type="Pfam" id="PF10431">
    <property type="entry name" value="ClpB_D2-small"/>
    <property type="match status" value="1"/>
</dbReference>
<dbReference type="Pfam" id="PF06689">
    <property type="entry name" value="zf-C4_ClpX"/>
    <property type="match status" value="1"/>
</dbReference>
<dbReference type="SMART" id="SM00382">
    <property type="entry name" value="AAA"/>
    <property type="match status" value="1"/>
</dbReference>
<dbReference type="SMART" id="SM01086">
    <property type="entry name" value="ClpB_D2-small"/>
    <property type="match status" value="1"/>
</dbReference>
<dbReference type="SMART" id="SM00994">
    <property type="entry name" value="zf-C4_ClpX"/>
    <property type="match status" value="1"/>
</dbReference>
<dbReference type="SUPFAM" id="SSF57716">
    <property type="entry name" value="Glucocorticoid receptor-like (DNA-binding domain)"/>
    <property type="match status" value="1"/>
</dbReference>
<dbReference type="SUPFAM" id="SSF52540">
    <property type="entry name" value="P-loop containing nucleoside triphosphate hydrolases"/>
    <property type="match status" value="1"/>
</dbReference>
<dbReference type="PROSITE" id="PS51902">
    <property type="entry name" value="CLPX_ZB"/>
    <property type="match status" value="1"/>
</dbReference>
<name>CLPX_COLP3</name>
<keyword id="KW-0067">ATP-binding</keyword>
<keyword id="KW-0143">Chaperone</keyword>
<keyword id="KW-0479">Metal-binding</keyword>
<keyword id="KW-0547">Nucleotide-binding</keyword>
<keyword id="KW-0862">Zinc</keyword>
<protein>
    <recommendedName>
        <fullName evidence="1">ATP-dependent Clp protease ATP-binding subunit ClpX</fullName>
    </recommendedName>
</protein>
<evidence type="ECO:0000255" key="1">
    <source>
        <dbReference type="HAMAP-Rule" id="MF_00175"/>
    </source>
</evidence>
<evidence type="ECO:0000255" key="2">
    <source>
        <dbReference type="PROSITE-ProRule" id="PRU01250"/>
    </source>
</evidence>
<gene>
    <name evidence="1" type="primary">clpX</name>
    <name type="ordered locus">CPS_3784</name>
</gene>
<proteinExistence type="inferred from homology"/>
<feature type="chain" id="PRO_1000024546" description="ATP-dependent Clp protease ATP-binding subunit ClpX">
    <location>
        <begin position="1"/>
        <end position="424"/>
    </location>
</feature>
<feature type="domain" description="ClpX-type ZB" evidence="2">
    <location>
        <begin position="4"/>
        <end position="57"/>
    </location>
</feature>
<feature type="binding site" evidence="2">
    <location>
        <position position="16"/>
    </location>
    <ligand>
        <name>Zn(2+)</name>
        <dbReference type="ChEBI" id="CHEBI:29105"/>
    </ligand>
</feature>
<feature type="binding site" evidence="2">
    <location>
        <position position="19"/>
    </location>
    <ligand>
        <name>Zn(2+)</name>
        <dbReference type="ChEBI" id="CHEBI:29105"/>
    </ligand>
</feature>
<feature type="binding site" evidence="2">
    <location>
        <position position="38"/>
    </location>
    <ligand>
        <name>Zn(2+)</name>
        <dbReference type="ChEBI" id="CHEBI:29105"/>
    </ligand>
</feature>
<feature type="binding site" evidence="2">
    <location>
        <position position="41"/>
    </location>
    <ligand>
        <name>Zn(2+)</name>
        <dbReference type="ChEBI" id="CHEBI:29105"/>
    </ligand>
</feature>
<feature type="binding site" evidence="1">
    <location>
        <begin position="121"/>
        <end position="128"/>
    </location>
    <ligand>
        <name>ATP</name>
        <dbReference type="ChEBI" id="CHEBI:30616"/>
    </ligand>
</feature>
<sequence length="424" mass="46665">MTDIKSGGDNGKLLYCSFCGKSQHEVRKLIAGPSVFVCDECVELCNDIIREEISEISPKESKEALPSPIEIRESLDEYVIGQDHAKKVLAVAVYNHYKRLRNGDNHNGIELGKSNILLIGPTGSGKTLLAQTLARLLDVPFTMADATTLTEAGYVGEDVENIIQKLLQKCDYDVEKAQRGIVYIDEIDKISRKSDNPSITRDVSGEGVQQALLKLIEGTVASVPPQGGRKHPQQEFLQVDTSKILFICGGAFAGLDKVVEQRNHTGTGIGFGAEVRGKDQEISLTDRLADVEPQDLVKYGLIPEFIGRLPVLATLRELDEAALIQILQEPKNALTKQFTALFDMENVELEFRSDALHAIARKAMDRKTGARGLRSIVEAVLLDTMYELPSMENVSKIVVDENTIKGESKPIVIYDSKQEQAASE</sequence>
<reference key="1">
    <citation type="journal article" date="2005" name="Proc. Natl. Acad. Sci. U.S.A.">
        <title>The psychrophilic lifestyle as revealed by the genome sequence of Colwellia psychrerythraea 34H through genomic and proteomic analyses.</title>
        <authorList>
            <person name="Methe B.A."/>
            <person name="Nelson K.E."/>
            <person name="Deming J.W."/>
            <person name="Momen B."/>
            <person name="Melamud E."/>
            <person name="Zhang X."/>
            <person name="Moult J."/>
            <person name="Madupu R."/>
            <person name="Nelson W.C."/>
            <person name="Dodson R.J."/>
            <person name="Brinkac L.M."/>
            <person name="Daugherty S.C."/>
            <person name="Durkin A.S."/>
            <person name="DeBoy R.T."/>
            <person name="Kolonay J.F."/>
            <person name="Sullivan S.A."/>
            <person name="Zhou L."/>
            <person name="Davidsen T.M."/>
            <person name="Wu M."/>
            <person name="Huston A.L."/>
            <person name="Lewis M."/>
            <person name="Weaver B."/>
            <person name="Weidman J.F."/>
            <person name="Khouri H."/>
            <person name="Utterback T.R."/>
            <person name="Feldblyum T.V."/>
            <person name="Fraser C.M."/>
        </authorList>
    </citation>
    <scope>NUCLEOTIDE SEQUENCE [LARGE SCALE GENOMIC DNA]</scope>
    <source>
        <strain>34H / ATCC BAA-681</strain>
    </source>
</reference>
<comment type="function">
    <text evidence="1">ATP-dependent specificity component of the Clp protease. It directs the protease to specific substrates. Can perform chaperone functions in the absence of ClpP.</text>
</comment>
<comment type="subunit">
    <text evidence="1">Component of the ClpX-ClpP complex. Forms a hexameric ring that, in the presence of ATP, binds to fourteen ClpP subunits assembled into a disk-like structure with a central cavity, resembling the structure of eukaryotic proteasomes.</text>
</comment>
<comment type="similarity">
    <text evidence="1">Belongs to the ClpX chaperone family.</text>
</comment>